<evidence type="ECO:0000255" key="1">
    <source>
        <dbReference type="PROSITE-ProRule" id="PRU00037"/>
    </source>
</evidence>
<evidence type="ECO:0000255" key="2">
    <source>
        <dbReference type="PROSITE-ProRule" id="PRU00129"/>
    </source>
</evidence>
<evidence type="ECO:0000269" key="3">
    <source>
    </source>
</evidence>
<evidence type="ECO:0000303" key="4">
    <source>
    </source>
</evidence>
<evidence type="ECO:0000303" key="5">
    <source ref="3"/>
</evidence>
<evidence type="ECO:0000305" key="6"/>
<evidence type="ECO:0000312" key="7">
    <source>
        <dbReference type="EMBL" id="AAL40187.1"/>
    </source>
</evidence>
<evidence type="ECO:0000312" key="8">
    <source>
        <dbReference type="EMBL" id="AAQ11977.1"/>
    </source>
</evidence>
<evidence type="ECO:0000312" key="9">
    <source>
        <dbReference type="MGI" id="MGI:2449436"/>
    </source>
</evidence>
<reference evidence="6 7" key="1">
    <citation type="journal article" date="2001" name="Mol. Reprod. Dev.">
        <title>In silico mining of EST databases for novel pre-implantation embryo-specific zinc finger protein genes.</title>
        <authorList>
            <person name="Choo K.-B."/>
            <person name="Chen H.-H."/>
            <person name="Cheng W.T.K."/>
            <person name="Chang H.-S."/>
            <person name="Wang M."/>
        </authorList>
    </citation>
    <scope>NUCLEOTIDE SEQUENCE [MRNA]</scope>
    <scope>DEVELOPMENTAL STAGE</scope>
    <source>
        <strain evidence="7">C57BL/6J X DBA/2</strain>
    </source>
</reference>
<reference evidence="8" key="2">
    <citation type="journal article" date="2004" name="Gene">
        <title>TDPOZ, a family of bipartite animal and plant proteins that contain the TRAF (TD) and POZ/BTB domains.</title>
        <authorList>
            <person name="Huang C.-J."/>
            <person name="Chen C.-Y."/>
            <person name="Chen H.-H."/>
            <person name="Tsai S.-F."/>
            <person name="Choo K.-B."/>
        </authorList>
    </citation>
    <scope>NUCLEOTIDE SEQUENCE [GENOMIC DNA]</scope>
    <source>
        <strain evidence="8">129/Sv</strain>
    </source>
</reference>
<reference key="3">
    <citation type="submission" date="2002-04" db="EMBL/GenBank/DDBJ databases">
        <title>MAPP: a novel and highly conserved family of proteins encompassing a MATH and a POZ domains.</title>
        <authorList>
            <person name="Huang C.-J."/>
            <person name="Hong S.-Y."/>
            <person name="Chen H.-H."/>
            <person name="Choo K.-B."/>
        </authorList>
    </citation>
    <scope>NUCLEOTIDE SEQUENCE [GENOMIC DNA]</scope>
    <source>
        <strain>129/Sv</strain>
    </source>
</reference>
<organism>
    <name type="scientific">Mus musculus</name>
    <name type="common">Mouse</name>
    <dbReference type="NCBI Taxonomy" id="10090"/>
    <lineage>
        <taxon>Eukaryota</taxon>
        <taxon>Metazoa</taxon>
        <taxon>Chordata</taxon>
        <taxon>Craniata</taxon>
        <taxon>Vertebrata</taxon>
        <taxon>Euteleostomi</taxon>
        <taxon>Mammalia</taxon>
        <taxon>Eutheria</taxon>
        <taxon>Euarchontoglires</taxon>
        <taxon>Glires</taxon>
        <taxon>Rodentia</taxon>
        <taxon>Myomorpha</taxon>
        <taxon>Muroidea</taxon>
        <taxon>Muridae</taxon>
        <taxon>Murinae</taxon>
        <taxon>Mus</taxon>
        <taxon>Mus</taxon>
    </lineage>
</organism>
<feature type="chain" id="PRO_0000191623" description="TD and POZ domain-containing protein 1">
    <location>
        <begin position="1"/>
        <end position="365"/>
    </location>
</feature>
<feature type="domain" description="MATH" evidence="2">
    <location>
        <begin position="19"/>
        <end position="149"/>
    </location>
</feature>
<feature type="domain" description="BTB" evidence="1">
    <location>
        <begin position="188"/>
        <end position="250"/>
    </location>
</feature>
<feature type="sequence conflict" description="In Ref. 2; AAQ11977." evidence="6" ref="2">
    <original>I</original>
    <variation>S</variation>
    <location>
        <position position="84"/>
    </location>
</feature>
<feature type="sequence conflict" description="In Ref. 2; AAQ11977 and 3; AAQ07947." evidence="6" ref="2 3">
    <original>IKSPT</original>
    <variation>TKSPI</variation>
    <location>
        <begin position="105"/>
        <end position="109"/>
    </location>
</feature>
<feature type="sequence conflict" description="In Ref. 2; AAQ11977 and 3; AAQ07947." evidence="6" ref="2 3">
    <original>NEQN</original>
    <variation>YEQS</variation>
    <location>
        <begin position="116"/>
        <end position="119"/>
    </location>
</feature>
<feature type="sequence conflict" description="In Ref. 2; AAQ11977." evidence="6" ref="2">
    <original>A</original>
    <variation>V</variation>
    <location>
        <position position="201"/>
    </location>
</feature>
<feature type="sequence conflict" description="In Ref. 3; AAQ07947." evidence="6" ref="3">
    <original>H</original>
    <variation>Y</variation>
    <location>
        <position position="253"/>
    </location>
</feature>
<feature type="sequence conflict" description="In Ref. 3; AAQ07947." evidence="6" ref="3">
    <original>L</original>
    <variation>F</variation>
    <location>
        <position position="283"/>
    </location>
</feature>
<feature type="sequence conflict" description="In Ref. 2; AAQ11977 and 3; AAQ07947." evidence="6" ref="2 3">
    <original>IL</original>
    <variation>MV</variation>
    <location>
        <begin position="331"/>
        <end position="332"/>
    </location>
</feature>
<feature type="sequence conflict" description="In Ref. 2; AAQ11977." evidence="6" ref="2">
    <original>A</original>
    <variation>T</variation>
    <location>
        <position position="347"/>
    </location>
</feature>
<proteinExistence type="evidence at transcript level"/>
<gene>
    <name evidence="9" type="primary">Tdpoz1</name>
    <name evidence="4" type="synonym">2cpoz56</name>
    <name type="synonym">Mapp2</name>
    <name evidence="9" type="synonym">Spopl1</name>
</gene>
<accession>P0DMR5</accession>
<accession>Q717B3</accession>
<accession>Q71G58</accession>
<accession>Q8BZV7</accession>
<accession>Q8VI39</accession>
<protein>
    <recommendedName>
        <fullName evidence="6">TD and POZ domain-containing protein 1</fullName>
    </recommendedName>
    <alternativeName>
        <fullName evidence="5">MAPP family protein 2</fullName>
    </alternativeName>
</protein>
<comment type="developmental stage">
    <text evidence="3">Expressed in unfertilized eggs and pre-implantation embryos. Undetectable in later-stage fetuses or in adult tissues.</text>
</comment>
<comment type="similarity">
    <text evidence="6">Belongs to the Tdpoz family.</text>
</comment>
<comment type="sequence caution" evidence="6">
    <conflict type="erroneous initiation">
        <sequence resource="EMBL-CDS" id="AAL40187"/>
    </conflict>
    <text>Truncated N-terminus.</text>
</comment>
<name>TDPZ1_MOUSE</name>
<keyword id="KW-1185">Reference proteome</keyword>
<sequence>MSEDMEFENWGSTQSSVEKFCYKWTISNFSFCMGGIQRRITSPVFSSEENKEVAWCLRVYPKGADKESKDYLSVYLVLLSHLQIPVWAKFKFWIINSQGEKYQKIKSPTVECFLTNEQNGFKKFLPRDLLLSHRNCLLPEDQLTICCKVTILGRKYNMPSQNITPAIKDPRHLLTDDLGELWENSLFTDCCLLVAGHEFRAHKAILAARSPVFRAMFEHEMKESLKTPIKIHNLNPQVFKEMMGFIYTGKAPHLHSHSMACDVLPAADKYGLVSLKVLCEDALCRNLSVKNATHTLILADLHSTEKLKTQALDFIAYYASEVCETSEWKSILESHPHLVAEAFQSLASAQCSFLEPKVISGSNQL</sequence>
<dbReference type="EMBL" id="AF290198">
    <property type="protein sequence ID" value="AAL40187.1"/>
    <property type="status" value="ALT_INIT"/>
    <property type="molecule type" value="mRNA"/>
</dbReference>
<dbReference type="EMBL" id="AF545858">
    <property type="protein sequence ID" value="AAQ11977.1"/>
    <property type="molecule type" value="Genomic_DNA"/>
</dbReference>
<dbReference type="EMBL" id="AF506823">
    <property type="protein sequence ID" value="AAQ07947.1"/>
    <property type="molecule type" value="Genomic_DNA"/>
</dbReference>
<dbReference type="CCDS" id="CCDS57231.1"/>
<dbReference type="RefSeq" id="NP_683751.2">
    <property type="nucleotide sequence ID" value="NM_148949.2"/>
</dbReference>
<dbReference type="SMR" id="P0DMR5"/>
<dbReference type="FunCoup" id="P0DMR5">
    <property type="interactions" value="60"/>
</dbReference>
<dbReference type="STRING" id="10090.ENSMUSP00000138008"/>
<dbReference type="iPTMnet" id="P0DMR5"/>
<dbReference type="PhosphoSitePlus" id="P0DMR5"/>
<dbReference type="PaxDb" id="10090-ENSMUSP00000138008"/>
<dbReference type="DNASU" id="207213"/>
<dbReference type="Ensembl" id="ENSMUST00000181541.2">
    <property type="protein sequence ID" value="ENSMUSP00000138008.2"/>
    <property type="gene ID" value="ENSMUSG00000094084.4"/>
</dbReference>
<dbReference type="GeneID" id="207213"/>
<dbReference type="KEGG" id="mmu:207213"/>
<dbReference type="UCSC" id="uc008qfm.2">
    <property type="organism name" value="mouse"/>
</dbReference>
<dbReference type="AGR" id="MGI:2449436"/>
<dbReference type="CTD" id="207213"/>
<dbReference type="MGI" id="MGI:2449436">
    <property type="gene designation" value="Tdpoz1"/>
</dbReference>
<dbReference type="VEuPathDB" id="HostDB:ENSMUSG00000094084"/>
<dbReference type="eggNOG" id="KOG1987">
    <property type="taxonomic scope" value="Eukaryota"/>
</dbReference>
<dbReference type="GeneTree" id="ENSGT00940000154376"/>
<dbReference type="HOGENOM" id="CLU_004253_2_0_1"/>
<dbReference type="InParanoid" id="P0DMR5"/>
<dbReference type="OMA" id="QAYPIRV"/>
<dbReference type="OrthoDB" id="9620072at2759"/>
<dbReference type="PhylomeDB" id="P0DMR5"/>
<dbReference type="BioGRID-ORCS" id="207213">
    <property type="hits" value="4 hits in 57 CRISPR screens"/>
</dbReference>
<dbReference type="PRO" id="PR:P0DMR5"/>
<dbReference type="Proteomes" id="UP000000589">
    <property type="component" value="Chromosome 3"/>
</dbReference>
<dbReference type="RNAct" id="P0DMR5">
    <property type="molecule type" value="protein"/>
</dbReference>
<dbReference type="Bgee" id="ENSMUSG00000094084">
    <property type="expression patterns" value="Expressed in cleaving embryo and 2 other cell types or tissues"/>
</dbReference>
<dbReference type="GO" id="GO:0030163">
    <property type="term" value="P:protein catabolic process"/>
    <property type="evidence" value="ECO:0007669"/>
    <property type="project" value="UniProtKB-ARBA"/>
</dbReference>
<dbReference type="CDD" id="cd18521">
    <property type="entry name" value="BACK_Tdpoz"/>
    <property type="match status" value="1"/>
</dbReference>
<dbReference type="CDD" id="cd18344">
    <property type="entry name" value="BTB_POZ_TDPOZ"/>
    <property type="match status" value="1"/>
</dbReference>
<dbReference type="FunFam" id="3.30.710.10:FF:000147">
    <property type="entry name" value="Predicted gene 4858"/>
    <property type="match status" value="1"/>
</dbReference>
<dbReference type="FunFam" id="2.60.210.10:FF:000003">
    <property type="entry name" value="Speckle-type POZ protein-like a"/>
    <property type="match status" value="1"/>
</dbReference>
<dbReference type="Gene3D" id="6.10.250.3030">
    <property type="match status" value="1"/>
</dbReference>
<dbReference type="Gene3D" id="6.20.250.50">
    <property type="match status" value="1"/>
</dbReference>
<dbReference type="Gene3D" id="2.60.210.10">
    <property type="entry name" value="Apoptosis, Tumor Necrosis Factor Receptor Associated Protein 2, Chain A"/>
    <property type="match status" value="1"/>
</dbReference>
<dbReference type="Gene3D" id="3.30.710.10">
    <property type="entry name" value="Potassium Channel Kv1.1, Chain A"/>
    <property type="match status" value="1"/>
</dbReference>
<dbReference type="InterPro" id="IPR000210">
    <property type="entry name" value="BTB/POZ_dom"/>
</dbReference>
<dbReference type="InterPro" id="IPR002083">
    <property type="entry name" value="MATH/TRAF_dom"/>
</dbReference>
<dbReference type="InterPro" id="IPR011333">
    <property type="entry name" value="SKP1/BTB/POZ_sf"/>
</dbReference>
<dbReference type="InterPro" id="IPR008974">
    <property type="entry name" value="TRAF-like"/>
</dbReference>
<dbReference type="PANTHER" id="PTHR24413">
    <property type="entry name" value="SPECKLE-TYPE POZ PROTEIN"/>
    <property type="match status" value="1"/>
</dbReference>
<dbReference type="Pfam" id="PF00651">
    <property type="entry name" value="BTB"/>
    <property type="match status" value="1"/>
</dbReference>
<dbReference type="Pfam" id="PF22486">
    <property type="entry name" value="MATH_2"/>
    <property type="match status" value="1"/>
</dbReference>
<dbReference type="SMART" id="SM00225">
    <property type="entry name" value="BTB"/>
    <property type="match status" value="1"/>
</dbReference>
<dbReference type="SMART" id="SM00061">
    <property type="entry name" value="MATH"/>
    <property type="match status" value="1"/>
</dbReference>
<dbReference type="SUPFAM" id="SSF54695">
    <property type="entry name" value="POZ domain"/>
    <property type="match status" value="1"/>
</dbReference>
<dbReference type="SUPFAM" id="SSF49599">
    <property type="entry name" value="TRAF domain-like"/>
    <property type="match status" value="1"/>
</dbReference>
<dbReference type="PROSITE" id="PS50097">
    <property type="entry name" value="BTB"/>
    <property type="match status" value="1"/>
</dbReference>
<dbReference type="PROSITE" id="PS50144">
    <property type="entry name" value="MATH"/>
    <property type="match status" value="1"/>
</dbReference>